<gene>
    <name type="ordered locus">KLLA0A06237g</name>
</gene>
<accession>Q6CXR1</accession>
<proteinExistence type="inferred from homology"/>
<evidence type="ECO:0000256" key="1">
    <source>
        <dbReference type="SAM" id="MobiDB-lite"/>
    </source>
</evidence>
<evidence type="ECO:0000305" key="2"/>
<comment type="similarity">
    <text evidence="2">Belongs to the UPF0508 family.</text>
</comment>
<reference key="1">
    <citation type="journal article" date="2004" name="Nature">
        <title>Genome evolution in yeasts.</title>
        <authorList>
            <person name="Dujon B."/>
            <person name="Sherman D."/>
            <person name="Fischer G."/>
            <person name="Durrens P."/>
            <person name="Casaregola S."/>
            <person name="Lafontaine I."/>
            <person name="de Montigny J."/>
            <person name="Marck C."/>
            <person name="Neuveglise C."/>
            <person name="Talla E."/>
            <person name="Goffard N."/>
            <person name="Frangeul L."/>
            <person name="Aigle M."/>
            <person name="Anthouard V."/>
            <person name="Babour A."/>
            <person name="Barbe V."/>
            <person name="Barnay S."/>
            <person name="Blanchin S."/>
            <person name="Beckerich J.-M."/>
            <person name="Beyne E."/>
            <person name="Bleykasten C."/>
            <person name="Boisrame A."/>
            <person name="Boyer J."/>
            <person name="Cattolico L."/>
            <person name="Confanioleri F."/>
            <person name="de Daruvar A."/>
            <person name="Despons L."/>
            <person name="Fabre E."/>
            <person name="Fairhead C."/>
            <person name="Ferry-Dumazet H."/>
            <person name="Groppi A."/>
            <person name="Hantraye F."/>
            <person name="Hennequin C."/>
            <person name="Jauniaux N."/>
            <person name="Joyet P."/>
            <person name="Kachouri R."/>
            <person name="Kerrest A."/>
            <person name="Koszul R."/>
            <person name="Lemaire M."/>
            <person name="Lesur I."/>
            <person name="Ma L."/>
            <person name="Muller H."/>
            <person name="Nicaud J.-M."/>
            <person name="Nikolski M."/>
            <person name="Oztas S."/>
            <person name="Ozier-Kalogeropoulos O."/>
            <person name="Pellenz S."/>
            <person name="Potier S."/>
            <person name="Richard G.-F."/>
            <person name="Straub M.-L."/>
            <person name="Suleau A."/>
            <person name="Swennen D."/>
            <person name="Tekaia F."/>
            <person name="Wesolowski-Louvel M."/>
            <person name="Westhof E."/>
            <person name="Wirth B."/>
            <person name="Zeniou-Meyer M."/>
            <person name="Zivanovic Y."/>
            <person name="Bolotin-Fukuhara M."/>
            <person name="Thierry A."/>
            <person name="Bouchier C."/>
            <person name="Caudron B."/>
            <person name="Scarpelli C."/>
            <person name="Gaillardin C."/>
            <person name="Weissenbach J."/>
            <person name="Wincker P."/>
            <person name="Souciet J.-L."/>
        </authorList>
    </citation>
    <scope>NUCLEOTIDE SEQUENCE [LARGE SCALE GENOMIC DNA]</scope>
    <source>
        <strain>ATCC 8585 / CBS 2359 / DSM 70799 / NBRC 1267 / NRRL Y-1140 / WM37</strain>
    </source>
</reference>
<dbReference type="EMBL" id="CR382121">
    <property type="protein sequence ID" value="CAH02866.1"/>
    <property type="molecule type" value="Genomic_DNA"/>
</dbReference>
<dbReference type="RefSeq" id="XP_451278.1">
    <property type="nucleotide sequence ID" value="XM_451278.1"/>
</dbReference>
<dbReference type="FunCoup" id="Q6CXR1">
    <property type="interactions" value="4"/>
</dbReference>
<dbReference type="STRING" id="284590.Q6CXR1"/>
<dbReference type="PaxDb" id="284590-Q6CXR1"/>
<dbReference type="KEGG" id="kla:KLLA0_A06237g"/>
<dbReference type="eggNOG" id="ENOG502QTEC">
    <property type="taxonomic scope" value="Eukaryota"/>
</dbReference>
<dbReference type="HOGENOM" id="CLU_338632_0_0_1"/>
<dbReference type="InParanoid" id="Q6CXR1"/>
<dbReference type="OMA" id="LVVCESH"/>
<dbReference type="Proteomes" id="UP000000598">
    <property type="component" value="Chromosome A"/>
</dbReference>
<organism>
    <name type="scientific">Kluyveromyces lactis (strain ATCC 8585 / CBS 2359 / DSM 70799 / NBRC 1267 / NRRL Y-1140 / WM37)</name>
    <name type="common">Yeast</name>
    <name type="synonym">Candida sphaerica</name>
    <dbReference type="NCBI Taxonomy" id="284590"/>
    <lineage>
        <taxon>Eukaryota</taxon>
        <taxon>Fungi</taxon>
        <taxon>Dikarya</taxon>
        <taxon>Ascomycota</taxon>
        <taxon>Saccharomycotina</taxon>
        <taxon>Saccharomycetes</taxon>
        <taxon>Saccharomycetales</taxon>
        <taxon>Saccharomycetaceae</taxon>
        <taxon>Kluyveromyces</taxon>
    </lineage>
</organism>
<name>U508_KLULA</name>
<sequence>MDNTVRLDQLHDEQYRRILPTLNGYFEQKDTSLSRLDPRNYRNENYKKMNAIIPVLLRAHQCHPTDWKLLFANAQTLNFYSALLEGLLMFMFQSFSTTVGFGSNMEFLRCMLKTYEYLYTVAKTLPSPELGQRVMSFQNHFMRNWNKVQCESLLFDQVKDLLSHAHDFVAPPLFNLESVIKRDYFKITCDKLRYENLCVELFHLDNGNMAIFKVNTQTLPLYTNEQTHELLLRLTRNIDMGAYQDPLFQIGRTLLFPTIRPMDLRIADESRKSILLETKTGNGVTLALTPYDTLAWSQHWRPFVQSLCAVADSPKAFLSDRNESTFGSPINKDTITSAGTRGLGISLKKSEVRTNLDTGLRKSKPLASEALSISEIESLNMKKLMELNDSTDASTMNSSMKSPVPTNIRHIQEPSNIIEQMSPVIGSRVDDIDSIISDDDGINNEGSLGGSPVFNLSAEFHKPQLTKRKSSSFLNLFKKDKSKSQKNSTDSLAKLSDTKSIHPPESAMSSHASTPSSTSKSSKSSKSSSTLSPSTCKLPSSVKLDTNNVLLDTLVKLSQWRNNSWRFFSSSWLQLQVVNSNQGRYMFVVQDDNSNLKLCIAIGERWTISRTTAQDIQIRFPPTDVVASVAEPVPTLLSVRCPQVDNIANLLKHCKKNEVILTSSNNMSNSATQLTLGSNSSSILSNNVSNMSFSRSSTASNDLSHGWSKPQVLDSSKDCKSLLLLSKIKVRLHKYDQQYGWKMTKVGLLNVYSREYNGSVAGCKFEMDDTESFISSISDLKRIGRTGISAGERLVEFKNQNVADETYKLLGAL</sequence>
<protein>
    <recommendedName>
        <fullName>UPF0508 protein KLLA0A06237g</fullName>
    </recommendedName>
</protein>
<keyword id="KW-1185">Reference proteome</keyword>
<feature type="chain" id="PRO_0000311661" description="UPF0508 protein KLLA0A06237g">
    <location>
        <begin position="1"/>
        <end position="813"/>
    </location>
</feature>
<feature type="region of interest" description="Disordered" evidence="1">
    <location>
        <begin position="478"/>
        <end position="537"/>
    </location>
</feature>
<feature type="compositionally biased region" description="Low complexity" evidence="1">
    <location>
        <begin position="506"/>
        <end position="537"/>
    </location>
</feature>